<protein>
    <recommendedName>
        <fullName evidence="1">Large ribosomal subunit protein uL23</fullName>
    </recommendedName>
    <alternativeName>
        <fullName evidence="2">50S ribosomal protein L23</fullName>
    </alternativeName>
</protein>
<comment type="function">
    <text evidence="1">One of the early assembly proteins it binds 23S rRNA. One of the proteins that surrounds the polypeptide exit tunnel on the outside of the ribosome. Forms the main docking site for trigger factor binding to the ribosome.</text>
</comment>
<comment type="subunit">
    <text evidence="1">Part of the 50S ribosomal subunit. Contacts protein L29, and trigger factor when it is bound to the ribosome.</text>
</comment>
<comment type="similarity">
    <text evidence="1">Belongs to the universal ribosomal protein uL23 family.</text>
</comment>
<organism>
    <name type="scientific">Aliivibrio fischeri (strain MJ11)</name>
    <name type="common">Vibrio fischeri</name>
    <dbReference type="NCBI Taxonomy" id="388396"/>
    <lineage>
        <taxon>Bacteria</taxon>
        <taxon>Pseudomonadati</taxon>
        <taxon>Pseudomonadota</taxon>
        <taxon>Gammaproteobacteria</taxon>
        <taxon>Vibrionales</taxon>
        <taxon>Vibrionaceae</taxon>
        <taxon>Aliivibrio</taxon>
    </lineage>
</organism>
<accession>B5FG11</accession>
<feature type="chain" id="PRO_1000144623" description="Large ribosomal subunit protein uL23">
    <location>
        <begin position="1"/>
        <end position="100"/>
    </location>
</feature>
<sequence length="100" mass="11071">MINEERLLKVLRGPLISEKATMAAEGNNTIVFKVAINATKKEIKAAVEKLFEVEVKSVNTLITKGKTKRQGLRQGRRSDVKKAYVILKEGQDLDFVGGAE</sequence>
<gene>
    <name evidence="1" type="primary">rplW</name>
    <name type="ordered locus">VFMJ11_0227</name>
</gene>
<proteinExistence type="inferred from homology"/>
<evidence type="ECO:0000255" key="1">
    <source>
        <dbReference type="HAMAP-Rule" id="MF_01369"/>
    </source>
</evidence>
<evidence type="ECO:0000305" key="2"/>
<keyword id="KW-0687">Ribonucleoprotein</keyword>
<keyword id="KW-0689">Ribosomal protein</keyword>
<keyword id="KW-0694">RNA-binding</keyword>
<keyword id="KW-0699">rRNA-binding</keyword>
<name>RL23_ALIFM</name>
<dbReference type="EMBL" id="CP001139">
    <property type="protein sequence ID" value="ACH65000.1"/>
    <property type="molecule type" value="Genomic_DNA"/>
</dbReference>
<dbReference type="RefSeq" id="WP_005417228.1">
    <property type="nucleotide sequence ID" value="NC_011184.1"/>
</dbReference>
<dbReference type="SMR" id="B5FG11"/>
<dbReference type="GeneID" id="54162860"/>
<dbReference type="KEGG" id="vfm:VFMJ11_0227"/>
<dbReference type="HOGENOM" id="CLU_037562_3_1_6"/>
<dbReference type="Proteomes" id="UP000001857">
    <property type="component" value="Chromosome I"/>
</dbReference>
<dbReference type="GO" id="GO:1990904">
    <property type="term" value="C:ribonucleoprotein complex"/>
    <property type="evidence" value="ECO:0007669"/>
    <property type="project" value="UniProtKB-KW"/>
</dbReference>
<dbReference type="GO" id="GO:0005840">
    <property type="term" value="C:ribosome"/>
    <property type="evidence" value="ECO:0007669"/>
    <property type="project" value="UniProtKB-KW"/>
</dbReference>
<dbReference type="GO" id="GO:0019843">
    <property type="term" value="F:rRNA binding"/>
    <property type="evidence" value="ECO:0007669"/>
    <property type="project" value="UniProtKB-UniRule"/>
</dbReference>
<dbReference type="GO" id="GO:0003735">
    <property type="term" value="F:structural constituent of ribosome"/>
    <property type="evidence" value="ECO:0007669"/>
    <property type="project" value="InterPro"/>
</dbReference>
<dbReference type="GO" id="GO:0006412">
    <property type="term" value="P:translation"/>
    <property type="evidence" value="ECO:0007669"/>
    <property type="project" value="UniProtKB-UniRule"/>
</dbReference>
<dbReference type="FunFam" id="3.30.70.330:FF:000001">
    <property type="entry name" value="50S ribosomal protein L23"/>
    <property type="match status" value="1"/>
</dbReference>
<dbReference type="Gene3D" id="3.30.70.330">
    <property type="match status" value="1"/>
</dbReference>
<dbReference type="HAMAP" id="MF_01369_B">
    <property type="entry name" value="Ribosomal_uL23_B"/>
    <property type="match status" value="1"/>
</dbReference>
<dbReference type="InterPro" id="IPR012677">
    <property type="entry name" value="Nucleotide-bd_a/b_plait_sf"/>
</dbReference>
<dbReference type="InterPro" id="IPR013025">
    <property type="entry name" value="Ribosomal_uL23-like"/>
</dbReference>
<dbReference type="InterPro" id="IPR012678">
    <property type="entry name" value="Ribosomal_uL23/eL15/eS24_sf"/>
</dbReference>
<dbReference type="NCBIfam" id="NF004358">
    <property type="entry name" value="PRK05738.1-1"/>
    <property type="match status" value="1"/>
</dbReference>
<dbReference type="NCBIfam" id="NF004359">
    <property type="entry name" value="PRK05738.1-3"/>
    <property type="match status" value="1"/>
</dbReference>
<dbReference type="NCBIfam" id="NF004363">
    <property type="entry name" value="PRK05738.2-4"/>
    <property type="match status" value="1"/>
</dbReference>
<dbReference type="PANTHER" id="PTHR11620">
    <property type="entry name" value="60S RIBOSOMAL PROTEIN L23A"/>
    <property type="match status" value="1"/>
</dbReference>
<dbReference type="Pfam" id="PF00276">
    <property type="entry name" value="Ribosomal_L23"/>
    <property type="match status" value="1"/>
</dbReference>
<dbReference type="SUPFAM" id="SSF54189">
    <property type="entry name" value="Ribosomal proteins S24e, L23 and L15e"/>
    <property type="match status" value="1"/>
</dbReference>
<reference key="1">
    <citation type="submission" date="2008-08" db="EMBL/GenBank/DDBJ databases">
        <title>Complete sequence of Vibrio fischeri strain MJ11.</title>
        <authorList>
            <person name="Mandel M.J."/>
            <person name="Stabb E.V."/>
            <person name="Ruby E.G."/>
            <person name="Ferriera S."/>
            <person name="Johnson J."/>
            <person name="Kravitz S."/>
            <person name="Beeson K."/>
            <person name="Sutton G."/>
            <person name="Rogers Y.-H."/>
            <person name="Friedman R."/>
            <person name="Frazier M."/>
            <person name="Venter J.C."/>
        </authorList>
    </citation>
    <scope>NUCLEOTIDE SEQUENCE [LARGE SCALE GENOMIC DNA]</scope>
    <source>
        <strain>MJ11</strain>
    </source>
</reference>